<sequence length="1995" mass="218090">MDIESDHEPKESSVDLEGRHDSIRKSFEADDIDVTDENTIFSTSRKEQSTIEPMDSFVENNIANSSSQQSVSEIDIQLPSSEPKEGVKEESNLIESNSLDNVQEINPQNTIGDKSAHTEEESSNDNLVKITAGTIISDIMDEPVVDEDDKLSEEDLSKEDLETTLKGDENYSSSQKEIYDNDETIPKPPSPEVEKIETSTSVENAYITNSQYNDTLDMEDQTSDLITTFEHENEDHEVHEVPSIHGMEGTFETVNLTSEAGNEKEFNNDSVVLNTTPKEMQISSLDAVDKLEDKPVSNDNIKANIESSTTVDRASSQLESENNESTFFVHNQNSSGQHQTLDFVASKPVTDTPELSKENTLVSSENLNDPKPNLPETEVDFGEPLEVEAPSFVVQNNSAVQPTTQKTSEDSTDLHTNEIPNVAQPPSSFEKENNKDTSKLENPDISSSPLSPTEDLFPNDPEEENLFSAALGLNSNTGSQPSETQSKPSIDPSESITVTDNQDSLLFSQLTNNALQAENATKVSENTINDEELIDDSEFTSLMSNFLESSTVQTNKYLPKSSASPPANAPIVSSDVHKNENAGTARRAPQSGAFVASKAKYSSPYDLPEEIVQVAQQKRSVSQNYNRQYSFQPRPATPSNPPRSLPPPSGQVNAPMSQTPNPISFAYQHGTPLATPTMRANSFNSYPASSAEPIRRPATTTVGHTPNLYSPKTNTYNSRHMAYEMTKSHINVISPGPSLQVNAPYTPTSGELGNKVSNPTKEFVSTSSYAPAANTRNAIIREPGILSPLSPRVQPVLSRRESIISMGSSASSYVPLEIAPRPMSSLEHTMNSAMSPGNLQRTANLYKPMTTPNAYNIKNSNQRETKYPYQPQAINYSEVTQPGSSSLPTSGEEANIIRSPGFTPLAAQKDATIYTPSHAQATLYGNMDNNDRDNEGIHDILQSDMEPVLPPHNSAYHANAPVSSHSEGLNNRLPISPLPPQLHKTGTPSHQHGFDTAETTAKQYAPSIPPNFNPNVSIDTMTEGVALPSATLDSDKSSLHKRSAELSRNNSPRPDFLPLPNQPLLHSNLHSPVSPVVDSNEDSRLKFLSTQRPAFSFGPCGTIVMAFSTPSGLYTTSGKGTKFIAGPIKIEKLGDVLTDEYRHLKEFKGPYLASNGKVDKHGKAEAIEWLSKYIDRLNQSLEYDDKNITLKDKLLLLQCLKMLLEVSDRKLIVEKLRPILLPSFEIPEPCNTATSVQELINPEINQDDSPIVASRYCTTSFLHRFYEYLLSGNKDEALTYALQQKQWPYAIIVAHSIDAKTFQGVVRTFCKSEVKESMLRSGVGVNLQLSLQLMSDAHASSMSEFSSSTSLLNLADQSQASNALVAWKELLYNIIANHYSDQKEALRVLGTLLLQENRVYAAHLVYILSLSPDVCSNKSNSLFELVGLSKHNLYPSHDDLFDVTQLTEVLELVFNVYSEKTPVFFTHLVPYRLYEAEVLAEAGEVSAARKYCELIGNYLNRVAKKSNNVDPGFVLRVRDLTQQILENSAGSEDISSSWLGRTVSRPRLDTVLSSLGSKFSKFVAGDPNFDVMRPATVGPGPFGKVASQKNLTVQTNTNNAAMESFYSDRPTSSGPSYQNRTPLTGQESMNMGVYSPYRRSTEIAENMSMDGNAYPYTPASQENPYTPRHSQEDNASVLSQQPLTFYSNVADNSYMPVSASQEPKMGMGTAFNMPTNEVHGVGAEMASPYQPLQPASAHLPNLQPTLAPINQNAYVPSNIAPAMGAMQSAPSAEAVAAPSESLNLNKDRSQQAKQAAAQNVADLVRQEEEKEKQKQKAKKNAESGKKGGAKGWFSKLLRRDESKDQPTVYKAKLGEKSHLHYDKELKRWVNDDGSDLSNQAAPPPPPPMALPKAGPPSAAPTSALPPAGPPAGATAISGNPGMPAPVPLTGKETAVPLSSMPNAPPSVASNAKLPPASNNRKVDPLEDILQAMPPPTTRKARGKTSKRYVDVMRNS</sequence>
<reference key="1">
    <citation type="journal article" date="2002" name="Nature">
        <title>The genome sequence of Schizosaccharomyces pombe.</title>
        <authorList>
            <person name="Wood V."/>
            <person name="Gwilliam R."/>
            <person name="Rajandream M.A."/>
            <person name="Lyne M.H."/>
            <person name="Lyne R."/>
            <person name="Stewart A."/>
            <person name="Sgouros J.G."/>
            <person name="Peat N."/>
            <person name="Hayles J."/>
            <person name="Baker S.G."/>
            <person name="Basham D."/>
            <person name="Bowman S."/>
            <person name="Brooks K."/>
            <person name="Brown D."/>
            <person name="Brown S."/>
            <person name="Chillingworth T."/>
            <person name="Churcher C.M."/>
            <person name="Collins M."/>
            <person name="Connor R."/>
            <person name="Cronin A."/>
            <person name="Davis P."/>
            <person name="Feltwell T."/>
            <person name="Fraser A."/>
            <person name="Gentles S."/>
            <person name="Goble A."/>
            <person name="Hamlin N."/>
            <person name="Harris D.E."/>
            <person name="Hidalgo J."/>
            <person name="Hodgson G."/>
            <person name="Holroyd S."/>
            <person name="Hornsby T."/>
            <person name="Howarth S."/>
            <person name="Huckle E.J."/>
            <person name="Hunt S."/>
            <person name="Jagels K."/>
            <person name="James K.D."/>
            <person name="Jones L."/>
            <person name="Jones M."/>
            <person name="Leather S."/>
            <person name="McDonald S."/>
            <person name="McLean J."/>
            <person name="Mooney P."/>
            <person name="Moule S."/>
            <person name="Mungall K.L."/>
            <person name="Murphy L.D."/>
            <person name="Niblett D."/>
            <person name="Odell C."/>
            <person name="Oliver K."/>
            <person name="O'Neil S."/>
            <person name="Pearson D."/>
            <person name="Quail M.A."/>
            <person name="Rabbinowitsch E."/>
            <person name="Rutherford K.M."/>
            <person name="Rutter S."/>
            <person name="Saunders D."/>
            <person name="Seeger K."/>
            <person name="Sharp S."/>
            <person name="Skelton J."/>
            <person name="Simmonds M.N."/>
            <person name="Squares R."/>
            <person name="Squares S."/>
            <person name="Stevens K."/>
            <person name="Taylor K."/>
            <person name="Taylor R.G."/>
            <person name="Tivey A."/>
            <person name="Walsh S.V."/>
            <person name="Warren T."/>
            <person name="Whitehead S."/>
            <person name="Woodward J.R."/>
            <person name="Volckaert G."/>
            <person name="Aert R."/>
            <person name="Robben J."/>
            <person name="Grymonprez B."/>
            <person name="Weltjens I."/>
            <person name="Vanstreels E."/>
            <person name="Rieger M."/>
            <person name="Schaefer M."/>
            <person name="Mueller-Auer S."/>
            <person name="Gabel C."/>
            <person name="Fuchs M."/>
            <person name="Duesterhoeft A."/>
            <person name="Fritzc C."/>
            <person name="Holzer E."/>
            <person name="Moestl D."/>
            <person name="Hilbert H."/>
            <person name="Borzym K."/>
            <person name="Langer I."/>
            <person name="Beck A."/>
            <person name="Lehrach H."/>
            <person name="Reinhardt R."/>
            <person name="Pohl T.M."/>
            <person name="Eger P."/>
            <person name="Zimmermann W."/>
            <person name="Wedler H."/>
            <person name="Wambutt R."/>
            <person name="Purnelle B."/>
            <person name="Goffeau A."/>
            <person name="Cadieu E."/>
            <person name="Dreano S."/>
            <person name="Gloux S."/>
            <person name="Lelaure V."/>
            <person name="Mottier S."/>
            <person name="Galibert F."/>
            <person name="Aves S.J."/>
            <person name="Xiang Z."/>
            <person name="Hunt C."/>
            <person name="Moore K."/>
            <person name="Hurst S.M."/>
            <person name="Lucas M."/>
            <person name="Rochet M."/>
            <person name="Gaillardin C."/>
            <person name="Tallada V.A."/>
            <person name="Garzon A."/>
            <person name="Thode G."/>
            <person name="Daga R.R."/>
            <person name="Cruzado L."/>
            <person name="Jimenez J."/>
            <person name="Sanchez M."/>
            <person name="del Rey F."/>
            <person name="Benito J."/>
            <person name="Dominguez A."/>
            <person name="Revuelta J.L."/>
            <person name="Moreno S."/>
            <person name="Armstrong J."/>
            <person name="Forsburg S.L."/>
            <person name="Cerutti L."/>
            <person name="Lowe T."/>
            <person name="McCombie W.R."/>
            <person name="Paulsen I."/>
            <person name="Potashkin J."/>
            <person name="Shpakovski G.V."/>
            <person name="Ussery D."/>
            <person name="Barrell B.G."/>
            <person name="Nurse P."/>
        </authorList>
    </citation>
    <scope>NUCLEOTIDE SEQUENCE [LARGE SCALE GENOMIC DNA]</scope>
    <source>
        <strain>972 / ATCC 24843</strain>
    </source>
</reference>
<reference key="2">
    <citation type="journal article" date="2008" name="J. Proteome Res.">
        <title>Phosphoproteome analysis of fission yeast.</title>
        <authorList>
            <person name="Wilson-Grady J.T."/>
            <person name="Villen J."/>
            <person name="Gygi S.P."/>
        </authorList>
    </citation>
    <scope>PHOSPHORYLATION [LARGE SCALE ANALYSIS] AT SER-790</scope>
    <scope>IDENTIFICATION BY MASS SPECTROMETRY</scope>
</reference>
<reference key="3">
    <citation type="journal article" date="2010" name="Cell Cycle">
        <title>High-throughput knockout screen in Schizosaccharomyces pombe identifies a novel gene required for efficient homolog disjunction during meiosis I.</title>
        <authorList>
            <person name="Rumpf C."/>
            <person name="Cipak L."/>
            <person name="Novatchkova M."/>
            <person name="Li Z."/>
            <person name="Polakova S."/>
            <person name="Dudas A."/>
            <person name="Kovacikova I."/>
            <person name="Miadokova E."/>
            <person name="Ammerer G."/>
            <person name="Gregan J."/>
        </authorList>
    </citation>
    <scope>IDENTIFICATION BY MASS SPECTROMETRY</scope>
    <scope>INTERACTION WITH DIL1</scope>
</reference>
<feature type="chain" id="PRO_0000076312" description="COPII coat assembly protein sec16">
    <location>
        <begin position="1"/>
        <end position="1995"/>
    </location>
</feature>
<feature type="region of interest" description="Disordered" evidence="2">
    <location>
        <begin position="1"/>
        <end position="32"/>
    </location>
</feature>
<feature type="region of interest" description="Disordered" evidence="2">
    <location>
        <begin position="61"/>
        <end position="127"/>
    </location>
</feature>
<feature type="region of interest" description="Disordered" evidence="2">
    <location>
        <begin position="140"/>
        <end position="198"/>
    </location>
</feature>
<feature type="region of interest" description="Disordered" evidence="2">
    <location>
        <begin position="349"/>
        <end position="378"/>
    </location>
</feature>
<feature type="region of interest" description="Disordered" evidence="2">
    <location>
        <begin position="392"/>
        <end position="496"/>
    </location>
</feature>
<feature type="region of interest" description="Disordered" evidence="2">
    <location>
        <begin position="557"/>
        <end position="594"/>
    </location>
</feature>
<feature type="region of interest" description="Disordered" evidence="2">
    <location>
        <begin position="629"/>
        <end position="661"/>
    </location>
</feature>
<feature type="region of interest" description="Disordered" evidence="2">
    <location>
        <begin position="945"/>
        <end position="994"/>
    </location>
</feature>
<feature type="region of interest" description="Disordered" evidence="2">
    <location>
        <begin position="1029"/>
        <end position="1063"/>
    </location>
</feature>
<feature type="region of interest" description="Disordered" evidence="2">
    <location>
        <begin position="1605"/>
        <end position="1631"/>
    </location>
</feature>
<feature type="region of interest" description="Disordered" evidence="2">
    <location>
        <begin position="1649"/>
        <end position="1675"/>
    </location>
</feature>
<feature type="region of interest" description="Disordered" evidence="2">
    <location>
        <begin position="1777"/>
        <end position="1995"/>
    </location>
</feature>
<feature type="compositionally biased region" description="Basic and acidic residues" evidence="2">
    <location>
        <begin position="1"/>
        <end position="28"/>
    </location>
</feature>
<feature type="compositionally biased region" description="Polar residues" evidence="2">
    <location>
        <begin position="61"/>
        <end position="72"/>
    </location>
</feature>
<feature type="compositionally biased region" description="Basic and acidic residues" evidence="2">
    <location>
        <begin position="82"/>
        <end position="91"/>
    </location>
</feature>
<feature type="compositionally biased region" description="Polar residues" evidence="2">
    <location>
        <begin position="93"/>
        <end position="112"/>
    </location>
</feature>
<feature type="compositionally biased region" description="Acidic residues" evidence="2">
    <location>
        <begin position="140"/>
        <end position="152"/>
    </location>
</feature>
<feature type="compositionally biased region" description="Basic and acidic residues" evidence="2">
    <location>
        <begin position="153"/>
        <end position="169"/>
    </location>
</feature>
<feature type="compositionally biased region" description="Polar residues" evidence="2">
    <location>
        <begin position="358"/>
        <end position="367"/>
    </location>
</feature>
<feature type="compositionally biased region" description="Polar residues" evidence="2">
    <location>
        <begin position="393"/>
        <end position="406"/>
    </location>
</feature>
<feature type="compositionally biased region" description="Basic and acidic residues" evidence="2">
    <location>
        <begin position="407"/>
        <end position="416"/>
    </location>
</feature>
<feature type="compositionally biased region" description="Basic and acidic residues" evidence="2">
    <location>
        <begin position="429"/>
        <end position="442"/>
    </location>
</feature>
<feature type="compositionally biased region" description="Polar residues" evidence="2">
    <location>
        <begin position="473"/>
        <end position="496"/>
    </location>
</feature>
<feature type="compositionally biased region" description="Low complexity" evidence="2">
    <location>
        <begin position="561"/>
        <end position="574"/>
    </location>
</feature>
<feature type="compositionally biased region" description="Pro residues" evidence="2">
    <location>
        <begin position="635"/>
        <end position="649"/>
    </location>
</feature>
<feature type="compositionally biased region" description="Polar residues" evidence="2">
    <location>
        <begin position="650"/>
        <end position="661"/>
    </location>
</feature>
<feature type="compositionally biased region" description="Basic and acidic residues" evidence="2">
    <location>
        <begin position="1033"/>
        <end position="1045"/>
    </location>
</feature>
<feature type="compositionally biased region" description="Polar residues" evidence="2">
    <location>
        <begin position="1609"/>
        <end position="1629"/>
    </location>
</feature>
<feature type="compositionally biased region" description="Basic and acidic residues" evidence="2">
    <location>
        <begin position="1804"/>
        <end position="1825"/>
    </location>
</feature>
<feature type="compositionally biased region" description="Basic and acidic residues" evidence="2">
    <location>
        <begin position="1852"/>
        <end position="1870"/>
    </location>
</feature>
<feature type="compositionally biased region" description="Pro residues" evidence="2">
    <location>
        <begin position="1881"/>
        <end position="1898"/>
    </location>
</feature>
<feature type="compositionally biased region" description="Low complexity" evidence="2">
    <location>
        <begin position="1899"/>
        <end position="1915"/>
    </location>
</feature>
<feature type="modified residue" description="Phosphoserine" evidence="3">
    <location>
        <position position="790"/>
    </location>
</feature>
<comment type="function">
    <text evidence="1">Involved in the initiation of assembly of the COPII coat required for the formation of transport vesicles from the endoplasmic reticulum (ER) and the selection of cargo molecules. Also involved in autophagy (By similarity).</text>
</comment>
<comment type="subunit">
    <text evidence="4">Interacts with dil1.</text>
</comment>
<comment type="subcellular location">
    <subcellularLocation>
        <location evidence="1">Endoplasmic reticulum membrane</location>
        <topology evidence="1">Peripheral membrane protein</topology>
        <orientation evidence="1">Cytoplasmic side</orientation>
    </subcellularLocation>
</comment>
<comment type="similarity">
    <text evidence="5">Belongs to the SEC16 family.</text>
</comment>
<organism>
    <name type="scientific">Schizosaccharomyces pombe (strain 972 / ATCC 24843)</name>
    <name type="common">Fission yeast</name>
    <dbReference type="NCBI Taxonomy" id="284812"/>
    <lineage>
        <taxon>Eukaryota</taxon>
        <taxon>Fungi</taxon>
        <taxon>Dikarya</taxon>
        <taxon>Ascomycota</taxon>
        <taxon>Taphrinomycotina</taxon>
        <taxon>Schizosaccharomycetes</taxon>
        <taxon>Schizosaccharomycetales</taxon>
        <taxon>Schizosaccharomycetaceae</taxon>
        <taxon>Schizosaccharomyces</taxon>
    </lineage>
</organism>
<evidence type="ECO:0000250" key="1"/>
<evidence type="ECO:0000256" key="2">
    <source>
        <dbReference type="SAM" id="MobiDB-lite"/>
    </source>
</evidence>
<evidence type="ECO:0000269" key="3">
    <source>
    </source>
</evidence>
<evidence type="ECO:0000269" key="4">
    <source>
    </source>
</evidence>
<evidence type="ECO:0000305" key="5"/>
<gene>
    <name type="primary">sec16</name>
    <name type="ORF">SPAC29B12.07</name>
</gene>
<accession>O14029</accession>
<protein>
    <recommendedName>
        <fullName>COPII coat assembly protein sec16</fullName>
    </recommendedName>
    <alternativeName>
        <fullName>Protein transport protein sec16</fullName>
    </alternativeName>
</protein>
<name>SEC16_SCHPO</name>
<dbReference type="EMBL" id="CU329670">
    <property type="protein sequence ID" value="CAB16252.2"/>
    <property type="molecule type" value="Genomic_DNA"/>
</dbReference>
<dbReference type="PIR" id="T38495">
    <property type="entry name" value="T38495"/>
</dbReference>
<dbReference type="RefSeq" id="NP_594985.1">
    <property type="nucleotide sequence ID" value="NM_001020416.2"/>
</dbReference>
<dbReference type="BioGRID" id="279131">
    <property type="interactions" value="3"/>
</dbReference>
<dbReference type="FunCoup" id="O14029">
    <property type="interactions" value="53"/>
</dbReference>
<dbReference type="STRING" id="284812.O14029"/>
<dbReference type="iPTMnet" id="O14029"/>
<dbReference type="PaxDb" id="4896-SPAC29B12.07.1"/>
<dbReference type="EnsemblFungi" id="SPAC29B12.07.1">
    <property type="protein sequence ID" value="SPAC29B12.07.1:pep"/>
    <property type="gene ID" value="SPAC29B12.07"/>
</dbReference>
<dbReference type="GeneID" id="2542678"/>
<dbReference type="KEGG" id="spo:2542678"/>
<dbReference type="PomBase" id="SPAC29B12.07">
    <property type="gene designation" value="sec16"/>
</dbReference>
<dbReference type="VEuPathDB" id="FungiDB:SPAC29B12.07"/>
<dbReference type="eggNOG" id="KOG1181">
    <property type="taxonomic scope" value="Eukaryota"/>
</dbReference>
<dbReference type="eggNOG" id="KOG1913">
    <property type="taxonomic scope" value="Eukaryota"/>
</dbReference>
<dbReference type="HOGENOM" id="CLU_236268_0_0_1"/>
<dbReference type="InParanoid" id="O14029"/>
<dbReference type="OMA" id="YKSPYDL"/>
<dbReference type="PhylomeDB" id="O14029"/>
<dbReference type="Reactome" id="R-SPO-204005">
    <property type="pathway name" value="COPII-mediated vesicle transport"/>
</dbReference>
<dbReference type="PRO" id="PR:O14029"/>
<dbReference type="Proteomes" id="UP000002485">
    <property type="component" value="Chromosome I"/>
</dbReference>
<dbReference type="GO" id="GO:0030127">
    <property type="term" value="C:COPII vesicle coat"/>
    <property type="evidence" value="ECO:0000266"/>
    <property type="project" value="PomBase"/>
</dbReference>
<dbReference type="GO" id="GO:0005737">
    <property type="term" value="C:cytoplasm"/>
    <property type="evidence" value="ECO:0007005"/>
    <property type="project" value="PomBase"/>
</dbReference>
<dbReference type="GO" id="GO:0070971">
    <property type="term" value="C:endoplasmic reticulum exit site"/>
    <property type="evidence" value="ECO:0000318"/>
    <property type="project" value="GO_Central"/>
</dbReference>
<dbReference type="GO" id="GO:0005789">
    <property type="term" value="C:endoplasmic reticulum membrane"/>
    <property type="evidence" value="ECO:0000266"/>
    <property type="project" value="PomBase"/>
</dbReference>
<dbReference type="GO" id="GO:0012507">
    <property type="term" value="C:ER to Golgi transport vesicle membrane"/>
    <property type="evidence" value="ECO:0000318"/>
    <property type="project" value="GO_Central"/>
</dbReference>
<dbReference type="GO" id="GO:0006914">
    <property type="term" value="P:autophagy"/>
    <property type="evidence" value="ECO:0000266"/>
    <property type="project" value="PomBase"/>
</dbReference>
<dbReference type="GO" id="GO:0007030">
    <property type="term" value="P:Golgi organization"/>
    <property type="evidence" value="ECO:0000318"/>
    <property type="project" value="GO_Central"/>
</dbReference>
<dbReference type="GO" id="GO:0006886">
    <property type="term" value="P:intracellular protein transport"/>
    <property type="evidence" value="ECO:0000303"/>
    <property type="project" value="PomBase"/>
</dbReference>
<dbReference type="GO" id="GO:0070973">
    <property type="term" value="P:protein localization to endoplasmic reticulum exit site"/>
    <property type="evidence" value="ECO:0000318"/>
    <property type="project" value="GO_Central"/>
</dbReference>
<dbReference type="GO" id="GO:0006901">
    <property type="term" value="P:vesicle coating"/>
    <property type="evidence" value="ECO:0000266"/>
    <property type="project" value="PomBase"/>
</dbReference>
<dbReference type="CDD" id="cd09233">
    <property type="entry name" value="ACE1-Sec16-like"/>
    <property type="match status" value="1"/>
</dbReference>
<dbReference type="Gene3D" id="1.25.40.1030">
    <property type="match status" value="1"/>
</dbReference>
<dbReference type="InterPro" id="IPR024340">
    <property type="entry name" value="Sec16_CCD"/>
</dbReference>
<dbReference type="InterPro" id="IPR024298">
    <property type="entry name" value="Sec16_Sec23-bd"/>
</dbReference>
<dbReference type="PANTHER" id="PTHR13402">
    <property type="entry name" value="RGPR-RELATED"/>
    <property type="match status" value="1"/>
</dbReference>
<dbReference type="PANTHER" id="PTHR13402:SF6">
    <property type="entry name" value="SECRETORY 16, ISOFORM I"/>
    <property type="match status" value="1"/>
</dbReference>
<dbReference type="Pfam" id="PF12932">
    <property type="entry name" value="Sec16"/>
    <property type="match status" value="1"/>
</dbReference>
<dbReference type="Pfam" id="PF12931">
    <property type="entry name" value="TPR_Sec16"/>
    <property type="match status" value="1"/>
</dbReference>
<proteinExistence type="evidence at protein level"/>
<keyword id="KW-0072">Autophagy</keyword>
<keyword id="KW-0256">Endoplasmic reticulum</keyword>
<keyword id="KW-0931">ER-Golgi transport</keyword>
<keyword id="KW-0472">Membrane</keyword>
<keyword id="KW-0597">Phosphoprotein</keyword>
<keyword id="KW-0653">Protein transport</keyword>
<keyword id="KW-1185">Reference proteome</keyword>
<keyword id="KW-0813">Transport</keyword>